<dbReference type="EC" id="3.5.1.88" evidence="1"/>
<dbReference type="EMBL" id="AE016828">
    <property type="protein sequence ID" value="AAO90514.1"/>
    <property type="molecule type" value="Genomic_DNA"/>
</dbReference>
<dbReference type="SMR" id="Q83CV9"/>
<dbReference type="STRING" id="227377.CBU_0993"/>
<dbReference type="EnsemblBacteria" id="AAO90514">
    <property type="protein sequence ID" value="AAO90514"/>
    <property type="gene ID" value="CBU_0993"/>
</dbReference>
<dbReference type="KEGG" id="cbu:CBU_0993"/>
<dbReference type="PATRIC" id="fig|227377.7.peg.987"/>
<dbReference type="eggNOG" id="COG0242">
    <property type="taxonomic scope" value="Bacteria"/>
</dbReference>
<dbReference type="HOGENOM" id="CLU_061901_2_1_6"/>
<dbReference type="OrthoDB" id="9804313at2"/>
<dbReference type="Proteomes" id="UP000002671">
    <property type="component" value="Chromosome"/>
</dbReference>
<dbReference type="GO" id="GO:0046872">
    <property type="term" value="F:metal ion binding"/>
    <property type="evidence" value="ECO:0007669"/>
    <property type="project" value="UniProtKB-KW"/>
</dbReference>
<dbReference type="GO" id="GO:0042586">
    <property type="term" value="F:peptide deformylase activity"/>
    <property type="evidence" value="ECO:0000318"/>
    <property type="project" value="GO_Central"/>
</dbReference>
<dbReference type="GO" id="GO:0043686">
    <property type="term" value="P:co-translational protein modification"/>
    <property type="evidence" value="ECO:0000318"/>
    <property type="project" value="GO_Central"/>
</dbReference>
<dbReference type="GO" id="GO:0006412">
    <property type="term" value="P:translation"/>
    <property type="evidence" value="ECO:0007669"/>
    <property type="project" value="UniProtKB-UniRule"/>
</dbReference>
<dbReference type="CDD" id="cd00487">
    <property type="entry name" value="Pep_deformylase"/>
    <property type="match status" value="1"/>
</dbReference>
<dbReference type="Gene3D" id="3.90.45.10">
    <property type="entry name" value="Peptide deformylase"/>
    <property type="match status" value="1"/>
</dbReference>
<dbReference type="HAMAP" id="MF_00163">
    <property type="entry name" value="Pep_deformylase"/>
    <property type="match status" value="1"/>
</dbReference>
<dbReference type="InterPro" id="IPR023635">
    <property type="entry name" value="Peptide_deformylase"/>
</dbReference>
<dbReference type="InterPro" id="IPR036821">
    <property type="entry name" value="Peptide_deformylase_sf"/>
</dbReference>
<dbReference type="NCBIfam" id="TIGR00079">
    <property type="entry name" value="pept_deformyl"/>
    <property type="match status" value="1"/>
</dbReference>
<dbReference type="NCBIfam" id="NF001159">
    <property type="entry name" value="PRK00150.1-3"/>
    <property type="match status" value="1"/>
</dbReference>
<dbReference type="PANTHER" id="PTHR10458">
    <property type="entry name" value="PEPTIDE DEFORMYLASE"/>
    <property type="match status" value="1"/>
</dbReference>
<dbReference type="PANTHER" id="PTHR10458:SF21">
    <property type="entry name" value="PEPTIDE DEFORMYLASE"/>
    <property type="match status" value="1"/>
</dbReference>
<dbReference type="Pfam" id="PF01327">
    <property type="entry name" value="Pep_deformylase"/>
    <property type="match status" value="1"/>
</dbReference>
<dbReference type="PIRSF" id="PIRSF004749">
    <property type="entry name" value="Pep_def"/>
    <property type="match status" value="1"/>
</dbReference>
<dbReference type="PRINTS" id="PR01576">
    <property type="entry name" value="PDEFORMYLASE"/>
</dbReference>
<dbReference type="SUPFAM" id="SSF56420">
    <property type="entry name" value="Peptide deformylase"/>
    <property type="match status" value="1"/>
</dbReference>
<protein>
    <recommendedName>
        <fullName evidence="1">Peptide deformylase 1</fullName>
        <shortName evidence="1">PDF 1</shortName>
        <ecNumber evidence="1">3.5.1.88</ecNumber>
    </recommendedName>
    <alternativeName>
        <fullName evidence="1">Polypeptide deformylase 1</fullName>
    </alternativeName>
</protein>
<reference key="1">
    <citation type="journal article" date="2003" name="Proc. Natl. Acad. Sci. U.S.A.">
        <title>Complete genome sequence of the Q-fever pathogen, Coxiella burnetii.</title>
        <authorList>
            <person name="Seshadri R."/>
            <person name="Paulsen I.T."/>
            <person name="Eisen J.A."/>
            <person name="Read T.D."/>
            <person name="Nelson K.E."/>
            <person name="Nelson W.C."/>
            <person name="Ward N.L."/>
            <person name="Tettelin H."/>
            <person name="Davidsen T.M."/>
            <person name="Beanan M.J."/>
            <person name="DeBoy R.T."/>
            <person name="Daugherty S.C."/>
            <person name="Brinkac L.M."/>
            <person name="Madupu R."/>
            <person name="Dodson R.J."/>
            <person name="Khouri H.M."/>
            <person name="Lee K.H."/>
            <person name="Carty H.A."/>
            <person name="Scanlan D."/>
            <person name="Heinzen R.A."/>
            <person name="Thompson H.A."/>
            <person name="Samuel J.E."/>
            <person name="Fraser C.M."/>
            <person name="Heidelberg J.F."/>
        </authorList>
    </citation>
    <scope>NUCLEOTIDE SEQUENCE [LARGE SCALE GENOMIC DNA]</scope>
    <source>
        <strain>RSA 493 / Nine Mile phase I</strain>
    </source>
</reference>
<feature type="chain" id="PRO_0000082776" description="Peptide deformylase 1">
    <location>
        <begin position="1"/>
        <end position="170"/>
    </location>
</feature>
<feature type="active site" evidence="1">
    <location>
        <position position="136"/>
    </location>
</feature>
<feature type="binding site" evidence="1">
    <location>
        <position position="92"/>
    </location>
    <ligand>
        <name>Fe cation</name>
        <dbReference type="ChEBI" id="CHEBI:24875"/>
    </ligand>
</feature>
<feature type="binding site" evidence="1">
    <location>
        <position position="135"/>
    </location>
    <ligand>
        <name>Fe cation</name>
        <dbReference type="ChEBI" id="CHEBI:24875"/>
    </ligand>
</feature>
<feature type="binding site" evidence="1">
    <location>
        <position position="139"/>
    </location>
    <ligand>
        <name>Fe cation</name>
        <dbReference type="ChEBI" id="CHEBI:24875"/>
    </ligand>
</feature>
<name>DEF1_COXBU</name>
<accession>Q83CV9</accession>
<evidence type="ECO:0000255" key="1">
    <source>
        <dbReference type="HAMAP-Rule" id="MF_00163"/>
    </source>
</evidence>
<comment type="function">
    <text evidence="1">Removes the formyl group from the N-terminal Met of newly synthesized proteins. Requires at least a dipeptide for an efficient rate of reaction. N-terminal L-methionine is a prerequisite for activity but the enzyme has broad specificity at other positions.</text>
</comment>
<comment type="catalytic activity">
    <reaction evidence="1">
        <text>N-terminal N-formyl-L-methionyl-[peptide] + H2O = N-terminal L-methionyl-[peptide] + formate</text>
        <dbReference type="Rhea" id="RHEA:24420"/>
        <dbReference type="Rhea" id="RHEA-COMP:10639"/>
        <dbReference type="Rhea" id="RHEA-COMP:10640"/>
        <dbReference type="ChEBI" id="CHEBI:15377"/>
        <dbReference type="ChEBI" id="CHEBI:15740"/>
        <dbReference type="ChEBI" id="CHEBI:49298"/>
        <dbReference type="ChEBI" id="CHEBI:64731"/>
        <dbReference type="EC" id="3.5.1.88"/>
    </reaction>
</comment>
<comment type="cofactor">
    <cofactor evidence="1">
        <name>Fe(2+)</name>
        <dbReference type="ChEBI" id="CHEBI:29033"/>
    </cofactor>
    <text evidence="1">Binds 1 Fe(2+) ion.</text>
</comment>
<comment type="similarity">
    <text evidence="1">Belongs to the polypeptide deformylase family.</text>
</comment>
<keyword id="KW-0378">Hydrolase</keyword>
<keyword id="KW-0408">Iron</keyword>
<keyword id="KW-0479">Metal-binding</keyword>
<keyword id="KW-0648">Protein biosynthesis</keyword>
<keyword id="KW-1185">Reference proteome</keyword>
<gene>
    <name evidence="1" type="primary">def1</name>
    <name type="ordered locus">CBU_0993</name>
</gene>
<sequence>MFKILQYPDPRLKTAAQRVEKFDDALQKMIDEMFETHYAATNCAALAATQLDMENPKHITVIDFSPNKDQPLCLVNAEIIERSGEHTEEEGCMSVGGGTFEKVTRAAKIKVRARDRYGKPVEFEADGFMAKCIQHELDHLNGIIFLDRLSTLKRGRIDKRLGKLRRQGKV</sequence>
<organism>
    <name type="scientific">Coxiella burnetii (strain RSA 493 / Nine Mile phase I)</name>
    <dbReference type="NCBI Taxonomy" id="227377"/>
    <lineage>
        <taxon>Bacteria</taxon>
        <taxon>Pseudomonadati</taxon>
        <taxon>Pseudomonadota</taxon>
        <taxon>Gammaproteobacteria</taxon>
        <taxon>Legionellales</taxon>
        <taxon>Coxiellaceae</taxon>
        <taxon>Coxiella</taxon>
    </lineage>
</organism>
<proteinExistence type="inferred from homology"/>